<keyword id="KW-0012">Acyltransferase</keyword>
<keyword id="KW-0441">Lipid A biosynthesis</keyword>
<keyword id="KW-0444">Lipid biosynthesis</keyword>
<keyword id="KW-0443">Lipid metabolism</keyword>
<keyword id="KW-1185">Reference proteome</keyword>
<keyword id="KW-0677">Repeat</keyword>
<keyword id="KW-0808">Transferase</keyword>
<gene>
    <name evidence="1" type="primary">lpxD</name>
    <name type="ordered locus">Pnap_1768</name>
</gene>
<proteinExistence type="inferred from homology"/>
<reference key="1">
    <citation type="journal article" date="2009" name="Environ. Microbiol.">
        <title>The genome of Polaromonas naphthalenivorans strain CJ2, isolated from coal tar-contaminated sediment, reveals physiological and metabolic versatility and evolution through extensive horizontal gene transfer.</title>
        <authorList>
            <person name="Yagi J.M."/>
            <person name="Sims D."/>
            <person name="Brettin T."/>
            <person name="Bruce D."/>
            <person name="Madsen E.L."/>
        </authorList>
    </citation>
    <scope>NUCLEOTIDE SEQUENCE [LARGE SCALE GENOMIC DNA]</scope>
    <source>
        <strain>CJ2</strain>
    </source>
</reference>
<protein>
    <recommendedName>
        <fullName evidence="1">UDP-3-O-acylglucosamine N-acyltransferase</fullName>
        <ecNumber evidence="1">2.3.1.191</ecNumber>
    </recommendedName>
</protein>
<name>LPXD_POLNA</name>
<accession>A1VN50</accession>
<sequence length="355" mass="37114">MTLRLADMTELLADKVQAELLGNSELLIERLSTLEAAGPNDLAFLSHPKYLGQLAQSAAGCVIVAPSAREAALKRGPCIVVDDPYYYFALVTQLWKRQHFPGAAPAIHASACIDPAAIISPHVSIGAFACIAAGAVIGEGARIAEHCVIGANAIVGANSRLSARVTVADDCRIGERCIIHPGAVIGADGFGFAPHDGQWVKIEQLGAVRIGNDVEIGANTCIDRGALQDTVIEDGVKLDNLVQIAHNVRVGRHSAMAGCAGVAGSATIGAHCTVGGGAIVLGHLRLADGVHVSAASIVTRSLLKPGHYTGLFPIDDNAAWEKNAATLKQLHALRERLKQTEKSLLQLQGSLEEKP</sequence>
<feature type="chain" id="PRO_1000050948" description="UDP-3-O-acylglucosamine N-acyltransferase">
    <location>
        <begin position="1"/>
        <end position="355"/>
    </location>
</feature>
<feature type="active site" description="Proton acceptor" evidence="1">
    <location>
        <position position="246"/>
    </location>
</feature>
<comment type="function">
    <text evidence="1">Catalyzes the N-acylation of UDP-3-O-acylglucosamine using 3-hydroxyacyl-ACP as the acyl donor. Is involved in the biosynthesis of lipid A, a phosphorylated glycolipid that anchors the lipopolysaccharide to the outer membrane of the cell.</text>
</comment>
<comment type="catalytic activity">
    <reaction evidence="1">
        <text>a UDP-3-O-[(3R)-3-hydroxyacyl]-alpha-D-glucosamine + a (3R)-hydroxyacyl-[ACP] = a UDP-2-N,3-O-bis[(3R)-3-hydroxyacyl]-alpha-D-glucosamine + holo-[ACP] + H(+)</text>
        <dbReference type="Rhea" id="RHEA:53836"/>
        <dbReference type="Rhea" id="RHEA-COMP:9685"/>
        <dbReference type="Rhea" id="RHEA-COMP:9945"/>
        <dbReference type="ChEBI" id="CHEBI:15378"/>
        <dbReference type="ChEBI" id="CHEBI:64479"/>
        <dbReference type="ChEBI" id="CHEBI:78827"/>
        <dbReference type="ChEBI" id="CHEBI:137740"/>
        <dbReference type="ChEBI" id="CHEBI:137748"/>
        <dbReference type="EC" id="2.3.1.191"/>
    </reaction>
</comment>
<comment type="pathway">
    <text evidence="1">Bacterial outer membrane biogenesis; LPS lipid A biosynthesis.</text>
</comment>
<comment type="subunit">
    <text evidence="1">Homotrimer.</text>
</comment>
<comment type="similarity">
    <text evidence="1">Belongs to the transferase hexapeptide repeat family. LpxD subfamily.</text>
</comment>
<evidence type="ECO:0000255" key="1">
    <source>
        <dbReference type="HAMAP-Rule" id="MF_00523"/>
    </source>
</evidence>
<dbReference type="EC" id="2.3.1.191" evidence="1"/>
<dbReference type="EMBL" id="CP000529">
    <property type="protein sequence ID" value="ABM37078.1"/>
    <property type="molecule type" value="Genomic_DNA"/>
</dbReference>
<dbReference type="RefSeq" id="WP_011801159.1">
    <property type="nucleotide sequence ID" value="NC_008781.1"/>
</dbReference>
<dbReference type="SMR" id="A1VN50"/>
<dbReference type="STRING" id="365044.Pnap_1768"/>
<dbReference type="KEGG" id="pna:Pnap_1768"/>
<dbReference type="eggNOG" id="COG1044">
    <property type="taxonomic scope" value="Bacteria"/>
</dbReference>
<dbReference type="HOGENOM" id="CLU_049865_0_0_4"/>
<dbReference type="OrthoDB" id="9784739at2"/>
<dbReference type="UniPathway" id="UPA00973"/>
<dbReference type="Proteomes" id="UP000000644">
    <property type="component" value="Chromosome"/>
</dbReference>
<dbReference type="GO" id="GO:0016020">
    <property type="term" value="C:membrane"/>
    <property type="evidence" value="ECO:0007669"/>
    <property type="project" value="GOC"/>
</dbReference>
<dbReference type="GO" id="GO:0016410">
    <property type="term" value="F:N-acyltransferase activity"/>
    <property type="evidence" value="ECO:0007669"/>
    <property type="project" value="InterPro"/>
</dbReference>
<dbReference type="GO" id="GO:0009245">
    <property type="term" value="P:lipid A biosynthetic process"/>
    <property type="evidence" value="ECO:0007669"/>
    <property type="project" value="UniProtKB-UniRule"/>
</dbReference>
<dbReference type="CDD" id="cd03352">
    <property type="entry name" value="LbH_LpxD"/>
    <property type="match status" value="1"/>
</dbReference>
<dbReference type="Gene3D" id="2.160.10.10">
    <property type="entry name" value="Hexapeptide repeat proteins"/>
    <property type="match status" value="1"/>
</dbReference>
<dbReference type="Gene3D" id="3.40.1390.10">
    <property type="entry name" value="MurE/MurF, N-terminal domain"/>
    <property type="match status" value="1"/>
</dbReference>
<dbReference type="HAMAP" id="MF_00523">
    <property type="entry name" value="LpxD"/>
    <property type="match status" value="1"/>
</dbReference>
<dbReference type="InterPro" id="IPR001451">
    <property type="entry name" value="Hexapep"/>
</dbReference>
<dbReference type="InterPro" id="IPR018357">
    <property type="entry name" value="Hexapep_transf_CS"/>
</dbReference>
<dbReference type="InterPro" id="IPR007691">
    <property type="entry name" value="LpxD"/>
</dbReference>
<dbReference type="InterPro" id="IPR011004">
    <property type="entry name" value="Trimer_LpxA-like_sf"/>
</dbReference>
<dbReference type="InterPro" id="IPR020573">
    <property type="entry name" value="UDP_GlcNAc_AcTrfase_non-rep"/>
</dbReference>
<dbReference type="NCBIfam" id="TIGR01853">
    <property type="entry name" value="lipid_A_lpxD"/>
    <property type="match status" value="1"/>
</dbReference>
<dbReference type="NCBIfam" id="NF002060">
    <property type="entry name" value="PRK00892.1"/>
    <property type="match status" value="1"/>
</dbReference>
<dbReference type="PANTHER" id="PTHR43378">
    <property type="entry name" value="UDP-3-O-ACYLGLUCOSAMINE N-ACYLTRANSFERASE"/>
    <property type="match status" value="1"/>
</dbReference>
<dbReference type="PANTHER" id="PTHR43378:SF2">
    <property type="entry name" value="UDP-3-O-ACYLGLUCOSAMINE N-ACYLTRANSFERASE 1, MITOCHONDRIAL-RELATED"/>
    <property type="match status" value="1"/>
</dbReference>
<dbReference type="Pfam" id="PF00132">
    <property type="entry name" value="Hexapep"/>
    <property type="match status" value="2"/>
</dbReference>
<dbReference type="Pfam" id="PF04613">
    <property type="entry name" value="LpxD"/>
    <property type="match status" value="1"/>
</dbReference>
<dbReference type="SUPFAM" id="SSF51161">
    <property type="entry name" value="Trimeric LpxA-like enzymes"/>
    <property type="match status" value="1"/>
</dbReference>
<dbReference type="PROSITE" id="PS00101">
    <property type="entry name" value="HEXAPEP_TRANSFERASES"/>
    <property type="match status" value="1"/>
</dbReference>
<organism>
    <name type="scientific">Polaromonas naphthalenivorans (strain CJ2)</name>
    <dbReference type="NCBI Taxonomy" id="365044"/>
    <lineage>
        <taxon>Bacteria</taxon>
        <taxon>Pseudomonadati</taxon>
        <taxon>Pseudomonadota</taxon>
        <taxon>Betaproteobacteria</taxon>
        <taxon>Burkholderiales</taxon>
        <taxon>Comamonadaceae</taxon>
        <taxon>Polaromonas</taxon>
    </lineage>
</organism>